<gene>
    <name type="primary">thra2</name>
    <name type="synonym">nr1a1-b</name>
</gene>
<keyword id="KW-0238">DNA-binding</keyword>
<keyword id="KW-0479">Metal-binding</keyword>
<keyword id="KW-0539">Nucleus</keyword>
<keyword id="KW-0675">Receptor</keyword>
<keyword id="KW-0804">Transcription</keyword>
<keyword id="KW-0805">Transcription regulation</keyword>
<keyword id="KW-0862">Zinc</keyword>
<keyword id="KW-0863">Zinc-finger</keyword>
<reference key="1">
    <citation type="journal article" date="1994" name="Dev. Genet.">
        <title>Cloning of thyroid hormone receptor genes expressed in metamorphosing flounder.</title>
        <authorList>
            <person name="Yamano K."/>
            <person name="Araki K."/>
            <person name="Sekikawa K."/>
            <person name="Inui Y."/>
        </authorList>
    </citation>
    <scope>NUCLEOTIDE SEQUENCE [MRNA]</scope>
</reference>
<organism>
    <name type="scientific">Paralichthys olivaceus</name>
    <name type="common">Bastard halibut</name>
    <name type="synonym">Hippoglossus olivaceus</name>
    <dbReference type="NCBI Taxonomy" id="8255"/>
    <lineage>
        <taxon>Eukaryota</taxon>
        <taxon>Metazoa</taxon>
        <taxon>Chordata</taxon>
        <taxon>Craniata</taxon>
        <taxon>Vertebrata</taxon>
        <taxon>Euteleostomi</taxon>
        <taxon>Actinopterygii</taxon>
        <taxon>Neopterygii</taxon>
        <taxon>Teleostei</taxon>
        <taxon>Neoteleostei</taxon>
        <taxon>Acanthomorphata</taxon>
        <taxon>Carangaria</taxon>
        <taxon>Pleuronectiformes</taxon>
        <taxon>Pleuronectoidei</taxon>
        <taxon>Paralichthyidae</taxon>
        <taxon>Paralichthys</taxon>
    </lineage>
</organism>
<comment type="function">
    <text>High affinity receptor for triiodothyronine.</text>
</comment>
<comment type="subcellular location">
    <subcellularLocation>
        <location>Nucleus</location>
    </subcellularLocation>
</comment>
<comment type="domain">
    <text>Composed of three domains: a modulating N-terminal domain, a DNA-binding domain and a C-terminal ligand-binding domain.</text>
</comment>
<comment type="similarity">
    <text evidence="3">Belongs to the nuclear hormone receptor family. NR1 subfamily.</text>
</comment>
<proteinExistence type="evidence at transcript level"/>
<evidence type="ECO:0000255" key="1">
    <source>
        <dbReference type="PROSITE-ProRule" id="PRU00407"/>
    </source>
</evidence>
<evidence type="ECO:0000255" key="2">
    <source>
        <dbReference type="PROSITE-ProRule" id="PRU01189"/>
    </source>
</evidence>
<evidence type="ECO:0000305" key="3"/>
<sequence>MAQWPEKEEEEQPMFGEEYTGYIPSYLEKDEPCVVCGDKATGYHYRCITCEGCKGFFRRTIQKNLHPSYSCKYDCCCIIDKITRNQCQLCRFKKCIAVGMAMDLVLDDSKRVAKRRLIEENRERRKKEEIVKTLQNRPEPTGAEWELIRMVTEAHRHTNAQGAQWKQKRKFLPDKIGQSPVAPTSDGDKVDLEAFSEFTKIITPAITRVVDFAKKLPMFSEQLPCEDQIILLKGCCMEIMSLRAAMRYDPESETLTLSGEMAVKREQLKNGGLGVVSDAIFDLGKSLAQFNLDDTEVALLQAVLLMSSDRSGLTCMDKIEKCQETYLLAFEHYINYRKHNIPHFWPKLLMKVTDLRMIGACHASRFLHMKVECPNELFPPLFLEVFEDQEV</sequence>
<dbReference type="EMBL" id="D16462">
    <property type="protein sequence ID" value="BAA03929.1"/>
    <property type="molecule type" value="mRNA"/>
</dbReference>
<dbReference type="PIR" id="I51097">
    <property type="entry name" value="I51097"/>
</dbReference>
<dbReference type="SMR" id="Q91242"/>
<dbReference type="GO" id="GO:0090575">
    <property type="term" value="C:RNA polymerase II transcription regulator complex"/>
    <property type="evidence" value="ECO:0007669"/>
    <property type="project" value="TreeGrafter"/>
</dbReference>
<dbReference type="GO" id="GO:0004879">
    <property type="term" value="F:nuclear receptor activity"/>
    <property type="evidence" value="ECO:0007669"/>
    <property type="project" value="InterPro"/>
</dbReference>
<dbReference type="GO" id="GO:0000978">
    <property type="term" value="F:RNA polymerase II cis-regulatory region sequence-specific DNA binding"/>
    <property type="evidence" value="ECO:0007669"/>
    <property type="project" value="TreeGrafter"/>
</dbReference>
<dbReference type="GO" id="GO:0008270">
    <property type="term" value="F:zinc ion binding"/>
    <property type="evidence" value="ECO:0007669"/>
    <property type="project" value="UniProtKB-KW"/>
</dbReference>
<dbReference type="GO" id="GO:0030154">
    <property type="term" value="P:cell differentiation"/>
    <property type="evidence" value="ECO:0007669"/>
    <property type="project" value="TreeGrafter"/>
</dbReference>
<dbReference type="GO" id="GO:0000122">
    <property type="term" value="P:negative regulation of transcription by RNA polymerase II"/>
    <property type="evidence" value="ECO:0007669"/>
    <property type="project" value="TreeGrafter"/>
</dbReference>
<dbReference type="GO" id="GO:0045944">
    <property type="term" value="P:positive regulation of transcription by RNA polymerase II"/>
    <property type="evidence" value="ECO:0007669"/>
    <property type="project" value="TreeGrafter"/>
</dbReference>
<dbReference type="GO" id="GO:0048384">
    <property type="term" value="P:retinoic acid receptor signaling pathway"/>
    <property type="evidence" value="ECO:0007669"/>
    <property type="project" value="TreeGrafter"/>
</dbReference>
<dbReference type="GO" id="GO:0002154">
    <property type="term" value="P:thyroid hormone receptor signaling pathway"/>
    <property type="evidence" value="ECO:0007669"/>
    <property type="project" value="TreeGrafter"/>
</dbReference>
<dbReference type="CDD" id="cd06961">
    <property type="entry name" value="NR_DBD_TR"/>
    <property type="match status" value="1"/>
</dbReference>
<dbReference type="CDD" id="cd06935">
    <property type="entry name" value="NR_LBD_TR"/>
    <property type="match status" value="1"/>
</dbReference>
<dbReference type="FunFam" id="1.10.565.10:FF:000006">
    <property type="entry name" value="Thyroid hormone receptor beta 2"/>
    <property type="match status" value="1"/>
</dbReference>
<dbReference type="FunFam" id="3.30.50.10:FF:000011">
    <property type="entry name" value="Thyroid hormone receptor beta isoform"/>
    <property type="match status" value="1"/>
</dbReference>
<dbReference type="Gene3D" id="3.30.50.10">
    <property type="entry name" value="Erythroid Transcription Factor GATA-1, subunit A"/>
    <property type="match status" value="1"/>
</dbReference>
<dbReference type="Gene3D" id="1.10.565.10">
    <property type="entry name" value="Retinoid X Receptor"/>
    <property type="match status" value="1"/>
</dbReference>
<dbReference type="InterPro" id="IPR035500">
    <property type="entry name" value="NHR-like_dom_sf"/>
</dbReference>
<dbReference type="InterPro" id="IPR000536">
    <property type="entry name" value="Nucl_hrmn_rcpt_lig-bd"/>
</dbReference>
<dbReference type="InterPro" id="IPR050234">
    <property type="entry name" value="Nuclear_hormone_rcpt_NR1"/>
</dbReference>
<dbReference type="InterPro" id="IPR001723">
    <property type="entry name" value="Nuclear_hrmn_rcpt"/>
</dbReference>
<dbReference type="InterPro" id="IPR001728">
    <property type="entry name" value="ThyrH_rcpt"/>
</dbReference>
<dbReference type="InterPro" id="IPR001628">
    <property type="entry name" value="Znf_hrmn_rcpt"/>
</dbReference>
<dbReference type="InterPro" id="IPR013088">
    <property type="entry name" value="Znf_NHR/GATA"/>
</dbReference>
<dbReference type="PANTHER" id="PTHR24082">
    <property type="entry name" value="NUCLEAR HORMONE RECEPTOR"/>
    <property type="match status" value="1"/>
</dbReference>
<dbReference type="PANTHER" id="PTHR24082:SF42">
    <property type="entry name" value="THYROID HORMONE RECEPTOR ALPHA"/>
    <property type="match status" value="1"/>
</dbReference>
<dbReference type="Pfam" id="PF00104">
    <property type="entry name" value="Hormone_recep"/>
    <property type="match status" value="1"/>
</dbReference>
<dbReference type="Pfam" id="PF00105">
    <property type="entry name" value="zf-C4"/>
    <property type="match status" value="1"/>
</dbReference>
<dbReference type="PRINTS" id="PR00398">
    <property type="entry name" value="STRDHORMONER"/>
</dbReference>
<dbReference type="PRINTS" id="PR00047">
    <property type="entry name" value="STROIDFINGER"/>
</dbReference>
<dbReference type="PRINTS" id="PR00546">
    <property type="entry name" value="THYROIDHORMR"/>
</dbReference>
<dbReference type="SMART" id="SM00430">
    <property type="entry name" value="HOLI"/>
    <property type="match status" value="1"/>
</dbReference>
<dbReference type="SMART" id="SM00399">
    <property type="entry name" value="ZnF_C4"/>
    <property type="match status" value="1"/>
</dbReference>
<dbReference type="SUPFAM" id="SSF57716">
    <property type="entry name" value="Glucocorticoid receptor-like (DNA-binding domain)"/>
    <property type="match status" value="1"/>
</dbReference>
<dbReference type="SUPFAM" id="SSF48508">
    <property type="entry name" value="Nuclear receptor ligand-binding domain"/>
    <property type="match status" value="1"/>
</dbReference>
<dbReference type="PROSITE" id="PS51843">
    <property type="entry name" value="NR_LBD"/>
    <property type="match status" value="1"/>
</dbReference>
<dbReference type="PROSITE" id="PS00031">
    <property type="entry name" value="NUCLEAR_REC_DBD_1"/>
    <property type="match status" value="1"/>
</dbReference>
<dbReference type="PROSITE" id="PS51030">
    <property type="entry name" value="NUCLEAR_REC_DBD_2"/>
    <property type="match status" value="1"/>
</dbReference>
<accession>Q91242</accession>
<protein>
    <recommendedName>
        <fullName>Thyroid hormone receptor alpha-B</fullName>
        <shortName>THR-alpha-B</shortName>
    </recommendedName>
    <alternativeName>
        <fullName>Nuclear receptor subfamily 1 group A member 1-B</fullName>
    </alternativeName>
</protein>
<name>THAB_PAROL</name>
<feature type="chain" id="PRO_0000053437" description="Thyroid hormone receptor alpha-B">
    <location>
        <begin position="1"/>
        <end position="391"/>
    </location>
</feature>
<feature type="domain" description="NR LBD" evidence="2">
    <location>
        <begin position="143"/>
        <end position="388"/>
    </location>
</feature>
<feature type="DNA-binding region" description="Nuclear receptor" evidence="1">
    <location>
        <begin position="33"/>
        <end position="100"/>
    </location>
</feature>
<feature type="zinc finger region" description="NR C4-type" evidence="1">
    <location>
        <begin position="33"/>
        <end position="53"/>
    </location>
</feature>
<feature type="zinc finger region" description="NR C4-type" evidence="1">
    <location>
        <begin position="71"/>
        <end position="95"/>
    </location>
</feature>
<feature type="region of interest" description="Modulating">
    <location>
        <begin position="1"/>
        <end position="32"/>
    </location>
</feature>